<sequence>MSPIMDALVPMVVEQTSRGERSYDIYSRLLKERVIFLTGQVEDHMANLVVAQLLFLESENPDKDIFLYINSPGGSVTAGMSIYDTMQFIKPNVSTVCMGQACSMGAFLLAGGAAGKRYVLPNSRVMIHQPLGGFQGQASDIQIHAQEILTIKQKLNNLLAEHTGQPLEVIERDTDRDNFMSAEQAVEYGIVDAVLSHRGA</sequence>
<accession>Q87R80</accession>
<proteinExistence type="inferred from homology"/>
<reference key="1">
    <citation type="journal article" date="2003" name="Lancet">
        <title>Genome sequence of Vibrio parahaemolyticus: a pathogenic mechanism distinct from that of V. cholerae.</title>
        <authorList>
            <person name="Makino K."/>
            <person name="Oshima K."/>
            <person name="Kurokawa K."/>
            <person name="Yokoyama K."/>
            <person name="Uda T."/>
            <person name="Tagomori K."/>
            <person name="Iijima Y."/>
            <person name="Najima M."/>
            <person name="Nakano M."/>
            <person name="Yamashita A."/>
            <person name="Kubota Y."/>
            <person name="Kimura S."/>
            <person name="Yasunaga T."/>
            <person name="Honda T."/>
            <person name="Shinagawa H."/>
            <person name="Hattori M."/>
            <person name="Iida T."/>
        </authorList>
    </citation>
    <scope>NUCLEOTIDE SEQUENCE [LARGE SCALE GENOMIC DNA]</scope>
    <source>
        <strain>RIMD 2210633</strain>
    </source>
</reference>
<organism>
    <name type="scientific">Vibrio parahaemolyticus serotype O3:K6 (strain RIMD 2210633)</name>
    <dbReference type="NCBI Taxonomy" id="223926"/>
    <lineage>
        <taxon>Bacteria</taxon>
        <taxon>Pseudomonadati</taxon>
        <taxon>Pseudomonadota</taxon>
        <taxon>Gammaproteobacteria</taxon>
        <taxon>Vibrionales</taxon>
        <taxon>Vibrionaceae</taxon>
        <taxon>Vibrio</taxon>
    </lineage>
</organism>
<gene>
    <name evidence="1" type="primary">clpP</name>
    <name type="ordered locus">VP0917</name>
</gene>
<keyword id="KW-0963">Cytoplasm</keyword>
<keyword id="KW-0378">Hydrolase</keyword>
<keyword id="KW-0645">Protease</keyword>
<keyword id="KW-0720">Serine protease</keyword>
<dbReference type="EC" id="3.4.21.92" evidence="1"/>
<dbReference type="EMBL" id="BA000031">
    <property type="protein sequence ID" value="BAC59180.1"/>
    <property type="molecule type" value="Genomic_DNA"/>
</dbReference>
<dbReference type="RefSeq" id="NP_797296.1">
    <property type="nucleotide sequence ID" value="NC_004603.1"/>
</dbReference>
<dbReference type="SMR" id="Q87R80"/>
<dbReference type="MEROPS" id="S14.001"/>
<dbReference type="KEGG" id="vpa:VP0917"/>
<dbReference type="PATRIC" id="fig|223926.6.peg.869"/>
<dbReference type="eggNOG" id="COG0740">
    <property type="taxonomic scope" value="Bacteria"/>
</dbReference>
<dbReference type="HOGENOM" id="CLU_058707_3_2_6"/>
<dbReference type="Proteomes" id="UP000002493">
    <property type="component" value="Chromosome 1"/>
</dbReference>
<dbReference type="GO" id="GO:0005737">
    <property type="term" value="C:cytoplasm"/>
    <property type="evidence" value="ECO:0007669"/>
    <property type="project" value="UniProtKB-SubCell"/>
</dbReference>
<dbReference type="GO" id="GO:0009368">
    <property type="term" value="C:endopeptidase Clp complex"/>
    <property type="evidence" value="ECO:0007669"/>
    <property type="project" value="TreeGrafter"/>
</dbReference>
<dbReference type="GO" id="GO:0004176">
    <property type="term" value="F:ATP-dependent peptidase activity"/>
    <property type="evidence" value="ECO:0007669"/>
    <property type="project" value="InterPro"/>
</dbReference>
<dbReference type="GO" id="GO:0051117">
    <property type="term" value="F:ATPase binding"/>
    <property type="evidence" value="ECO:0007669"/>
    <property type="project" value="TreeGrafter"/>
</dbReference>
<dbReference type="GO" id="GO:0004252">
    <property type="term" value="F:serine-type endopeptidase activity"/>
    <property type="evidence" value="ECO:0007669"/>
    <property type="project" value="UniProtKB-UniRule"/>
</dbReference>
<dbReference type="GO" id="GO:0006515">
    <property type="term" value="P:protein quality control for misfolded or incompletely synthesized proteins"/>
    <property type="evidence" value="ECO:0007669"/>
    <property type="project" value="TreeGrafter"/>
</dbReference>
<dbReference type="CDD" id="cd07017">
    <property type="entry name" value="S14_ClpP_2"/>
    <property type="match status" value="1"/>
</dbReference>
<dbReference type="FunFam" id="3.90.226.10:FF:000001">
    <property type="entry name" value="ATP-dependent Clp protease proteolytic subunit"/>
    <property type="match status" value="1"/>
</dbReference>
<dbReference type="Gene3D" id="3.90.226.10">
    <property type="entry name" value="2-enoyl-CoA Hydratase, Chain A, domain 1"/>
    <property type="match status" value="1"/>
</dbReference>
<dbReference type="HAMAP" id="MF_00444">
    <property type="entry name" value="ClpP"/>
    <property type="match status" value="1"/>
</dbReference>
<dbReference type="InterPro" id="IPR001907">
    <property type="entry name" value="ClpP"/>
</dbReference>
<dbReference type="InterPro" id="IPR029045">
    <property type="entry name" value="ClpP/crotonase-like_dom_sf"/>
</dbReference>
<dbReference type="InterPro" id="IPR023562">
    <property type="entry name" value="ClpP/TepA"/>
</dbReference>
<dbReference type="InterPro" id="IPR033135">
    <property type="entry name" value="ClpP_His_AS"/>
</dbReference>
<dbReference type="InterPro" id="IPR018215">
    <property type="entry name" value="ClpP_Ser_AS"/>
</dbReference>
<dbReference type="NCBIfam" id="TIGR00493">
    <property type="entry name" value="clpP"/>
    <property type="match status" value="1"/>
</dbReference>
<dbReference type="NCBIfam" id="NF001368">
    <property type="entry name" value="PRK00277.1"/>
    <property type="match status" value="1"/>
</dbReference>
<dbReference type="NCBIfam" id="NF009205">
    <property type="entry name" value="PRK12553.1"/>
    <property type="match status" value="1"/>
</dbReference>
<dbReference type="PANTHER" id="PTHR10381">
    <property type="entry name" value="ATP-DEPENDENT CLP PROTEASE PROTEOLYTIC SUBUNIT"/>
    <property type="match status" value="1"/>
</dbReference>
<dbReference type="PANTHER" id="PTHR10381:SF70">
    <property type="entry name" value="ATP-DEPENDENT CLP PROTEASE PROTEOLYTIC SUBUNIT"/>
    <property type="match status" value="1"/>
</dbReference>
<dbReference type="Pfam" id="PF00574">
    <property type="entry name" value="CLP_protease"/>
    <property type="match status" value="1"/>
</dbReference>
<dbReference type="PRINTS" id="PR00127">
    <property type="entry name" value="CLPPROTEASEP"/>
</dbReference>
<dbReference type="SUPFAM" id="SSF52096">
    <property type="entry name" value="ClpP/crotonase"/>
    <property type="match status" value="1"/>
</dbReference>
<dbReference type="PROSITE" id="PS00382">
    <property type="entry name" value="CLP_PROTEASE_HIS"/>
    <property type="match status" value="1"/>
</dbReference>
<dbReference type="PROSITE" id="PS00381">
    <property type="entry name" value="CLP_PROTEASE_SER"/>
    <property type="match status" value="1"/>
</dbReference>
<comment type="function">
    <text evidence="1">Cleaves peptides in various proteins in a process that requires ATP hydrolysis. Has a chymotrypsin-like activity. Plays a major role in the degradation of misfolded proteins.</text>
</comment>
<comment type="catalytic activity">
    <reaction evidence="1">
        <text>Hydrolysis of proteins to small peptides in the presence of ATP and magnesium. alpha-casein is the usual test substrate. In the absence of ATP, only oligopeptides shorter than five residues are hydrolyzed (such as succinyl-Leu-Tyr-|-NHMec, and Leu-Tyr-Leu-|-Tyr-Trp, in which cleavage of the -Tyr-|-Leu- and -Tyr-|-Trp bonds also occurs).</text>
        <dbReference type="EC" id="3.4.21.92"/>
    </reaction>
</comment>
<comment type="subunit">
    <text evidence="1">Fourteen ClpP subunits assemble into 2 heptameric rings which stack back to back to give a disk-like structure with a central cavity, resembling the structure of eukaryotic proteasomes.</text>
</comment>
<comment type="subcellular location">
    <subcellularLocation>
        <location evidence="1">Cytoplasm</location>
    </subcellularLocation>
</comment>
<comment type="similarity">
    <text evidence="1">Belongs to the peptidase S14 family.</text>
</comment>
<name>CLPP_VIBPA</name>
<evidence type="ECO:0000255" key="1">
    <source>
        <dbReference type="HAMAP-Rule" id="MF_00444"/>
    </source>
</evidence>
<protein>
    <recommendedName>
        <fullName evidence="1">ATP-dependent Clp protease proteolytic subunit</fullName>
        <ecNumber evidence="1">3.4.21.92</ecNumber>
    </recommendedName>
    <alternativeName>
        <fullName evidence="1">Endopeptidase Clp</fullName>
    </alternativeName>
</protein>
<feature type="chain" id="PRO_0000179712" description="ATP-dependent Clp protease proteolytic subunit">
    <location>
        <begin position="1"/>
        <end position="200"/>
    </location>
</feature>
<feature type="active site" description="Nucleophile" evidence="1">
    <location>
        <position position="103"/>
    </location>
</feature>
<feature type="active site" evidence="1">
    <location>
        <position position="128"/>
    </location>
</feature>